<name>PYRH_PROMT</name>
<sequence>MTYSRALIKLSGEALMGDKPYGIDPEIVQSIAKDVSKVVENGTQIAIVVGGGNIFRGLKGSAAGMDRATADYVGMLATVMNAITLQDGLERAGVPTRVQSAIDMQQIAEPYIRRRAIRHLEKGRVVVFGGGCGNPFFTTDTTAALRAAEINAEVVFKATKVDGVYDRDPKKFTDAVKYDNLTFQDVLANEIGVMDSTAIALCKDNKIPIVVFNIFQPGNIAKAISGEPIGSRISNSS</sequence>
<reference key="1">
    <citation type="journal article" date="2007" name="PLoS Genet.">
        <title>Patterns and implications of gene gain and loss in the evolution of Prochlorococcus.</title>
        <authorList>
            <person name="Kettler G.C."/>
            <person name="Martiny A.C."/>
            <person name="Huang K."/>
            <person name="Zucker J."/>
            <person name="Coleman M.L."/>
            <person name="Rodrigue S."/>
            <person name="Chen F."/>
            <person name="Lapidus A."/>
            <person name="Ferriera S."/>
            <person name="Johnson J."/>
            <person name="Steglich C."/>
            <person name="Church G.M."/>
            <person name="Richardson P."/>
            <person name="Chisholm S.W."/>
        </authorList>
    </citation>
    <scope>NUCLEOTIDE SEQUENCE [LARGE SCALE GENOMIC DNA]</scope>
    <source>
        <strain>NATL2A</strain>
    </source>
</reference>
<dbReference type="EC" id="2.7.4.22" evidence="1"/>
<dbReference type="EMBL" id="CP000095">
    <property type="protein sequence ID" value="AAZ59342.1"/>
    <property type="molecule type" value="Genomic_DNA"/>
</dbReference>
<dbReference type="RefSeq" id="WP_011294486.1">
    <property type="nucleotide sequence ID" value="NC_007335.2"/>
</dbReference>
<dbReference type="SMR" id="Q46GQ4"/>
<dbReference type="STRING" id="59920.PMN2A_1854"/>
<dbReference type="KEGG" id="pmn:PMN2A_1854"/>
<dbReference type="HOGENOM" id="CLU_033861_0_0_3"/>
<dbReference type="OrthoDB" id="9807458at2"/>
<dbReference type="PhylomeDB" id="Q46GQ4"/>
<dbReference type="UniPathway" id="UPA00159">
    <property type="reaction ID" value="UER00275"/>
</dbReference>
<dbReference type="Proteomes" id="UP000002535">
    <property type="component" value="Chromosome"/>
</dbReference>
<dbReference type="GO" id="GO:0005737">
    <property type="term" value="C:cytoplasm"/>
    <property type="evidence" value="ECO:0007669"/>
    <property type="project" value="UniProtKB-SubCell"/>
</dbReference>
<dbReference type="GO" id="GO:0005524">
    <property type="term" value="F:ATP binding"/>
    <property type="evidence" value="ECO:0007669"/>
    <property type="project" value="UniProtKB-KW"/>
</dbReference>
<dbReference type="GO" id="GO:0033862">
    <property type="term" value="F:UMP kinase activity"/>
    <property type="evidence" value="ECO:0007669"/>
    <property type="project" value="UniProtKB-EC"/>
</dbReference>
<dbReference type="GO" id="GO:0044210">
    <property type="term" value="P:'de novo' CTP biosynthetic process"/>
    <property type="evidence" value="ECO:0007669"/>
    <property type="project" value="UniProtKB-UniRule"/>
</dbReference>
<dbReference type="GO" id="GO:0006225">
    <property type="term" value="P:UDP biosynthetic process"/>
    <property type="evidence" value="ECO:0007669"/>
    <property type="project" value="TreeGrafter"/>
</dbReference>
<dbReference type="CDD" id="cd04254">
    <property type="entry name" value="AAK_UMPK-PyrH-Ec"/>
    <property type="match status" value="1"/>
</dbReference>
<dbReference type="FunFam" id="3.40.1160.10:FF:000001">
    <property type="entry name" value="Uridylate kinase"/>
    <property type="match status" value="1"/>
</dbReference>
<dbReference type="Gene3D" id="3.40.1160.10">
    <property type="entry name" value="Acetylglutamate kinase-like"/>
    <property type="match status" value="1"/>
</dbReference>
<dbReference type="HAMAP" id="MF_01220_B">
    <property type="entry name" value="PyrH_B"/>
    <property type="match status" value="1"/>
</dbReference>
<dbReference type="InterPro" id="IPR036393">
    <property type="entry name" value="AceGlu_kinase-like_sf"/>
</dbReference>
<dbReference type="InterPro" id="IPR001048">
    <property type="entry name" value="Asp/Glu/Uridylate_kinase"/>
</dbReference>
<dbReference type="InterPro" id="IPR011817">
    <property type="entry name" value="Uridylate_kinase"/>
</dbReference>
<dbReference type="InterPro" id="IPR015963">
    <property type="entry name" value="Uridylate_kinase_bac"/>
</dbReference>
<dbReference type="NCBIfam" id="TIGR02075">
    <property type="entry name" value="pyrH_bact"/>
    <property type="match status" value="1"/>
</dbReference>
<dbReference type="PANTHER" id="PTHR42833">
    <property type="entry name" value="URIDYLATE KINASE"/>
    <property type="match status" value="1"/>
</dbReference>
<dbReference type="PANTHER" id="PTHR42833:SF4">
    <property type="entry name" value="URIDYLATE KINASE PUMPKIN, CHLOROPLASTIC"/>
    <property type="match status" value="1"/>
</dbReference>
<dbReference type="Pfam" id="PF00696">
    <property type="entry name" value="AA_kinase"/>
    <property type="match status" value="1"/>
</dbReference>
<dbReference type="PIRSF" id="PIRSF005650">
    <property type="entry name" value="Uridylate_kin"/>
    <property type="match status" value="1"/>
</dbReference>
<dbReference type="SUPFAM" id="SSF53633">
    <property type="entry name" value="Carbamate kinase-like"/>
    <property type="match status" value="1"/>
</dbReference>
<accession>Q46GQ4</accession>
<proteinExistence type="inferred from homology"/>
<feature type="chain" id="PRO_0000323925" description="Uridylate kinase">
    <location>
        <begin position="1"/>
        <end position="237"/>
    </location>
</feature>
<feature type="binding site" evidence="1">
    <location>
        <begin position="9"/>
        <end position="12"/>
    </location>
    <ligand>
        <name>ATP</name>
        <dbReference type="ChEBI" id="CHEBI:30616"/>
    </ligand>
</feature>
<feature type="binding site" evidence="1">
    <location>
        <position position="51"/>
    </location>
    <ligand>
        <name>UMP</name>
        <dbReference type="ChEBI" id="CHEBI:57865"/>
    </ligand>
</feature>
<feature type="binding site" evidence="1">
    <location>
        <position position="52"/>
    </location>
    <ligand>
        <name>ATP</name>
        <dbReference type="ChEBI" id="CHEBI:30616"/>
    </ligand>
</feature>
<feature type="binding site" evidence="1">
    <location>
        <position position="56"/>
    </location>
    <ligand>
        <name>ATP</name>
        <dbReference type="ChEBI" id="CHEBI:30616"/>
    </ligand>
</feature>
<feature type="binding site" evidence="1">
    <location>
        <position position="71"/>
    </location>
    <ligand>
        <name>UMP</name>
        <dbReference type="ChEBI" id="CHEBI:57865"/>
    </ligand>
</feature>
<feature type="binding site" evidence="1">
    <location>
        <begin position="132"/>
        <end position="139"/>
    </location>
    <ligand>
        <name>UMP</name>
        <dbReference type="ChEBI" id="CHEBI:57865"/>
    </ligand>
</feature>
<feature type="binding site" evidence="1">
    <location>
        <position position="159"/>
    </location>
    <ligand>
        <name>ATP</name>
        <dbReference type="ChEBI" id="CHEBI:30616"/>
    </ligand>
</feature>
<feature type="binding site" evidence="1">
    <location>
        <position position="165"/>
    </location>
    <ligand>
        <name>ATP</name>
        <dbReference type="ChEBI" id="CHEBI:30616"/>
    </ligand>
</feature>
<feature type="binding site" evidence="1">
    <location>
        <position position="168"/>
    </location>
    <ligand>
        <name>ATP</name>
        <dbReference type="ChEBI" id="CHEBI:30616"/>
    </ligand>
</feature>
<comment type="function">
    <text evidence="1">Catalyzes the reversible phosphorylation of UMP to UDP.</text>
</comment>
<comment type="catalytic activity">
    <reaction evidence="1">
        <text>UMP + ATP = UDP + ADP</text>
        <dbReference type="Rhea" id="RHEA:24400"/>
        <dbReference type="ChEBI" id="CHEBI:30616"/>
        <dbReference type="ChEBI" id="CHEBI:57865"/>
        <dbReference type="ChEBI" id="CHEBI:58223"/>
        <dbReference type="ChEBI" id="CHEBI:456216"/>
        <dbReference type="EC" id="2.7.4.22"/>
    </reaction>
</comment>
<comment type="activity regulation">
    <text evidence="1">Inhibited by UTP.</text>
</comment>
<comment type="pathway">
    <text evidence="1">Pyrimidine metabolism; CTP biosynthesis via de novo pathway; UDP from UMP (UMPK route): step 1/1.</text>
</comment>
<comment type="subunit">
    <text evidence="1">Homohexamer.</text>
</comment>
<comment type="subcellular location">
    <subcellularLocation>
        <location evidence="1">Cytoplasm</location>
    </subcellularLocation>
</comment>
<comment type="similarity">
    <text evidence="1">Belongs to the UMP kinase family.</text>
</comment>
<organism>
    <name type="scientific">Prochlorococcus marinus (strain NATL2A)</name>
    <dbReference type="NCBI Taxonomy" id="59920"/>
    <lineage>
        <taxon>Bacteria</taxon>
        <taxon>Bacillati</taxon>
        <taxon>Cyanobacteriota</taxon>
        <taxon>Cyanophyceae</taxon>
        <taxon>Synechococcales</taxon>
        <taxon>Prochlorococcaceae</taxon>
        <taxon>Prochlorococcus</taxon>
    </lineage>
</organism>
<protein>
    <recommendedName>
        <fullName evidence="1">Uridylate kinase</fullName>
        <shortName evidence="1">UK</shortName>
        <ecNumber evidence="1">2.7.4.22</ecNumber>
    </recommendedName>
    <alternativeName>
        <fullName evidence="1">Uridine monophosphate kinase</fullName>
        <shortName evidence="1">UMP kinase</shortName>
        <shortName evidence="1">UMPK</shortName>
    </alternativeName>
</protein>
<gene>
    <name evidence="1" type="primary">pyrH</name>
    <name type="ordered locus">PMN2A_1854</name>
</gene>
<keyword id="KW-0067">ATP-binding</keyword>
<keyword id="KW-0963">Cytoplasm</keyword>
<keyword id="KW-0418">Kinase</keyword>
<keyword id="KW-0547">Nucleotide-binding</keyword>
<keyword id="KW-0665">Pyrimidine biosynthesis</keyword>
<keyword id="KW-1185">Reference proteome</keyword>
<keyword id="KW-0808">Transferase</keyword>
<evidence type="ECO:0000255" key="1">
    <source>
        <dbReference type="HAMAP-Rule" id="MF_01220"/>
    </source>
</evidence>